<dbReference type="EMBL" id="D87261">
    <property type="protein sequence ID" value="BAA23143.1"/>
    <property type="molecule type" value="mRNA"/>
</dbReference>
<dbReference type="EMBL" id="AP004632">
    <property type="protein sequence ID" value="BAD09732.1"/>
    <property type="molecule type" value="Genomic_DNA"/>
</dbReference>
<dbReference type="EMBL" id="AP008214">
    <property type="protein sequence ID" value="BAF24323.1"/>
    <property type="molecule type" value="Genomic_DNA"/>
</dbReference>
<dbReference type="EMBL" id="AP014964">
    <property type="protein sequence ID" value="BAT06528.1"/>
    <property type="molecule type" value="Genomic_DNA"/>
</dbReference>
<dbReference type="EMBL" id="CM000145">
    <property type="protein sequence ID" value="EAZ43537.1"/>
    <property type="molecule type" value="Genomic_DNA"/>
</dbReference>
<dbReference type="EMBL" id="AK060536">
    <property type="protein sequence ID" value="BAG87484.1"/>
    <property type="molecule type" value="mRNA"/>
</dbReference>
<dbReference type="EMBL" id="AK119660">
    <property type="protein sequence ID" value="BAG99734.1"/>
    <property type="molecule type" value="mRNA"/>
</dbReference>
<dbReference type="PIR" id="T02976">
    <property type="entry name" value="T02976"/>
</dbReference>
<dbReference type="RefSeq" id="XP_015648330.1">
    <property type="nucleotide sequence ID" value="XM_015792844.1"/>
</dbReference>
<dbReference type="SMR" id="Q6ZBH6"/>
<dbReference type="FunCoup" id="Q6ZBH6">
    <property type="interactions" value="810"/>
</dbReference>
<dbReference type="STRING" id="39947.Q6ZBH6"/>
<dbReference type="PaxDb" id="39947-Q6ZBH6"/>
<dbReference type="EnsemblPlants" id="Os08t0544800-01">
    <property type="protein sequence ID" value="Os08t0544800-01"/>
    <property type="gene ID" value="Os08g0544800"/>
</dbReference>
<dbReference type="Gramene" id="Os08t0544800-01">
    <property type="protein sequence ID" value="Os08t0544800-01"/>
    <property type="gene ID" value="Os08g0544800"/>
</dbReference>
<dbReference type="KEGG" id="dosa:Os08g0544800"/>
<dbReference type="eggNOG" id="ENOG502QR5H">
    <property type="taxonomic scope" value="Eukaryota"/>
</dbReference>
<dbReference type="HOGENOM" id="CLU_050452_0_0_1"/>
<dbReference type="InParanoid" id="Q6ZBH6"/>
<dbReference type="OMA" id="GANHMIP"/>
<dbReference type="OrthoDB" id="1911901at2759"/>
<dbReference type="Proteomes" id="UP000000763">
    <property type="component" value="Chromosome 8"/>
</dbReference>
<dbReference type="Proteomes" id="UP000007752">
    <property type="component" value="Chromosome 8"/>
</dbReference>
<dbReference type="Proteomes" id="UP000059680">
    <property type="component" value="Chromosome 8"/>
</dbReference>
<dbReference type="GO" id="GO:0005634">
    <property type="term" value="C:nucleus"/>
    <property type="evidence" value="ECO:0000314"/>
    <property type="project" value="UniProtKB"/>
</dbReference>
<dbReference type="GO" id="GO:0001216">
    <property type="term" value="F:DNA-binding transcription activator activity"/>
    <property type="evidence" value="ECO:0000314"/>
    <property type="project" value="UniProtKB"/>
</dbReference>
<dbReference type="GO" id="GO:0003700">
    <property type="term" value="F:DNA-binding transcription factor activity"/>
    <property type="evidence" value="ECO:0000318"/>
    <property type="project" value="GO_Central"/>
</dbReference>
<dbReference type="GO" id="GO:0042803">
    <property type="term" value="F:protein homodimerization activity"/>
    <property type="evidence" value="ECO:0000314"/>
    <property type="project" value="UniProtKB"/>
</dbReference>
<dbReference type="GO" id="GO:0043565">
    <property type="term" value="F:sequence-specific DNA binding"/>
    <property type="evidence" value="ECO:0000314"/>
    <property type="project" value="UniProtKB"/>
</dbReference>
<dbReference type="GO" id="GO:0045893">
    <property type="term" value="P:positive regulation of DNA-templated transcription"/>
    <property type="evidence" value="ECO:0000314"/>
    <property type="project" value="UniProtKB"/>
</dbReference>
<dbReference type="InterPro" id="IPR017887">
    <property type="entry name" value="TF_TCP_subgr"/>
</dbReference>
<dbReference type="InterPro" id="IPR005333">
    <property type="entry name" value="Transcription_factor_TCP"/>
</dbReference>
<dbReference type="PANTHER" id="PTHR31072:SF183">
    <property type="entry name" value="TRANSCRIPTION FACTOR PCF2"/>
    <property type="match status" value="1"/>
</dbReference>
<dbReference type="PANTHER" id="PTHR31072">
    <property type="entry name" value="TRANSCRIPTION FACTOR TCP4-RELATED"/>
    <property type="match status" value="1"/>
</dbReference>
<dbReference type="Pfam" id="PF03634">
    <property type="entry name" value="TCP"/>
    <property type="match status" value="1"/>
</dbReference>
<dbReference type="PROSITE" id="PS51369">
    <property type="entry name" value="TCP"/>
    <property type="match status" value="1"/>
</dbReference>
<protein>
    <recommendedName>
        <fullName evidence="7">Transcription factor PCF2</fullName>
    </recommendedName>
    <alternativeName>
        <fullName evidence="6">Proliferating cell factor 2</fullName>
    </alternativeName>
</protein>
<proteinExistence type="evidence at protein level"/>
<comment type="function">
    <text evidence="3 4 5">Transcription activator. Binds the promoter core sequence 5'-GGNCC-3', especially at sites IIa (5'-GGGCCCAC-3') and IIb (5'-GGTCCCAC-3') (essential for meristematic tissue-specificity expression) of the PCNA gene promoter (PubMed:12000681, PubMed:9338963). Can target the TCP motif 5'-TGGGCC/T-3' (PubMed:24170127).</text>
</comment>
<comment type="subunit">
    <text evidence="4 5">Forms homodimers and heterodimers with PCF1 (PubMed:9338963). Interacts with SPL14/IPA1 (PubMed:24170127).</text>
</comment>
<comment type="subcellular location">
    <subcellularLocation>
        <location evidence="4">Nucleus</location>
    </subcellularLocation>
</comment>
<comment type="tissue specificity">
    <text evidence="5">Expressed in seedlings and leaves, mostly in the lower region rich in dividing cells.</text>
</comment>
<evidence type="ECO:0000255" key="1">
    <source>
        <dbReference type="PROSITE-ProRule" id="PRU00701"/>
    </source>
</evidence>
<evidence type="ECO:0000256" key="2">
    <source>
        <dbReference type="SAM" id="MobiDB-lite"/>
    </source>
</evidence>
<evidence type="ECO:0000269" key="3">
    <source>
    </source>
</evidence>
<evidence type="ECO:0000269" key="4">
    <source>
    </source>
</evidence>
<evidence type="ECO:0000269" key="5">
    <source>
    </source>
</evidence>
<evidence type="ECO:0000303" key="6">
    <source>
    </source>
</evidence>
<evidence type="ECO:0000305" key="7"/>
<feature type="chain" id="PRO_0000330804" description="Transcription factor PCF2">
    <location>
        <begin position="1"/>
        <end position="373"/>
    </location>
</feature>
<feature type="domain" description="TCP" evidence="1">
    <location>
        <begin position="75"/>
        <end position="129"/>
    </location>
</feature>
<feature type="region of interest" description="Disordered" evidence="2">
    <location>
        <begin position="1"/>
        <end position="38"/>
    </location>
</feature>
<feature type="region of interest" description="Disordered" evidence="2">
    <location>
        <begin position="149"/>
        <end position="182"/>
    </location>
</feature>
<feature type="region of interest" description="Disordered" evidence="2">
    <location>
        <begin position="322"/>
        <end position="373"/>
    </location>
</feature>
<feature type="compositionally biased region" description="Gly residues" evidence="2">
    <location>
        <begin position="28"/>
        <end position="38"/>
    </location>
</feature>
<feature type="compositionally biased region" description="Low complexity" evidence="2">
    <location>
        <begin position="152"/>
        <end position="162"/>
    </location>
</feature>
<feature type="compositionally biased region" description="Basic and acidic residues" evidence="2">
    <location>
        <begin position="325"/>
        <end position="345"/>
    </location>
</feature>
<feature type="compositionally biased region" description="Acidic residues" evidence="2">
    <location>
        <begin position="354"/>
        <end position="373"/>
    </location>
</feature>
<feature type="sequence conflict" description="In Ref. 1; BAA23143." evidence="7" ref="1">
    <original>Q</original>
    <variation>R</variation>
    <location>
        <position position="264"/>
    </location>
</feature>
<gene>
    <name evidence="6" type="primary">PCF2</name>
    <name type="ordered locus">Os08g0544800</name>
    <name type="ordered locus">LOC_Os08g43160</name>
    <name type="ORF">OsJ_027020</name>
    <name type="ORF">P0623F08.31</name>
</gene>
<keyword id="KW-0010">Activator</keyword>
<keyword id="KW-0217">Developmental protein</keyword>
<keyword id="KW-0238">DNA-binding</keyword>
<keyword id="KW-0539">Nucleus</keyword>
<keyword id="KW-1185">Reference proteome</keyword>
<keyword id="KW-0804">Transcription</keyword>
<keyword id="KW-0805">Transcription regulation</keyword>
<name>PCF2_ORYSJ</name>
<reference key="1">
    <citation type="journal article" date="1997" name="Plant Cell">
        <title>PCF1 and PCF2 specifically bind to cis elements in the rice proliferating cell nuclear antigen gene.</title>
        <authorList>
            <person name="Kosugi S."/>
            <person name="Ohashi Y."/>
        </authorList>
    </citation>
    <scope>NUCLEOTIDE SEQUENCE [MRNA]</scope>
    <scope>FUNCTION</scope>
    <scope>TISSUE SPECIFICITY</scope>
    <scope>HOMODIMER</scope>
    <scope>INTERACTION WITH PCF1</scope>
    <source>
        <strain>cv. Nipponbare</strain>
        <tissue>Meristem</tissue>
    </source>
</reference>
<reference key="2">
    <citation type="journal article" date="2005" name="Nature">
        <title>The map-based sequence of the rice genome.</title>
        <authorList>
            <consortium name="International rice genome sequencing project (IRGSP)"/>
        </authorList>
    </citation>
    <scope>NUCLEOTIDE SEQUENCE [LARGE SCALE GENOMIC DNA]</scope>
    <source>
        <strain>cv. Nipponbare</strain>
    </source>
</reference>
<reference key="3">
    <citation type="journal article" date="2008" name="Nucleic Acids Res.">
        <title>The rice annotation project database (RAP-DB): 2008 update.</title>
        <authorList>
            <consortium name="The rice annotation project (RAP)"/>
        </authorList>
    </citation>
    <scope>GENOME REANNOTATION</scope>
    <source>
        <strain>cv. Nipponbare</strain>
    </source>
</reference>
<reference key="4">
    <citation type="journal article" date="2013" name="Rice">
        <title>Improvement of the Oryza sativa Nipponbare reference genome using next generation sequence and optical map data.</title>
        <authorList>
            <person name="Kawahara Y."/>
            <person name="de la Bastide M."/>
            <person name="Hamilton J.P."/>
            <person name="Kanamori H."/>
            <person name="McCombie W.R."/>
            <person name="Ouyang S."/>
            <person name="Schwartz D.C."/>
            <person name="Tanaka T."/>
            <person name="Wu J."/>
            <person name="Zhou S."/>
            <person name="Childs K.L."/>
            <person name="Davidson R.M."/>
            <person name="Lin H."/>
            <person name="Quesada-Ocampo L."/>
            <person name="Vaillancourt B."/>
            <person name="Sakai H."/>
            <person name="Lee S.S."/>
            <person name="Kim J."/>
            <person name="Numa H."/>
            <person name="Itoh T."/>
            <person name="Buell C.R."/>
            <person name="Matsumoto T."/>
        </authorList>
    </citation>
    <scope>GENOME REANNOTATION</scope>
    <source>
        <strain>cv. Nipponbare</strain>
    </source>
</reference>
<reference key="5">
    <citation type="journal article" date="2005" name="PLoS Biol.">
        <title>The genomes of Oryza sativa: a history of duplications.</title>
        <authorList>
            <person name="Yu J."/>
            <person name="Wang J."/>
            <person name="Lin W."/>
            <person name="Li S."/>
            <person name="Li H."/>
            <person name="Zhou J."/>
            <person name="Ni P."/>
            <person name="Dong W."/>
            <person name="Hu S."/>
            <person name="Zeng C."/>
            <person name="Zhang J."/>
            <person name="Zhang Y."/>
            <person name="Li R."/>
            <person name="Xu Z."/>
            <person name="Li S."/>
            <person name="Li X."/>
            <person name="Zheng H."/>
            <person name="Cong L."/>
            <person name="Lin L."/>
            <person name="Yin J."/>
            <person name="Geng J."/>
            <person name="Li G."/>
            <person name="Shi J."/>
            <person name="Liu J."/>
            <person name="Lv H."/>
            <person name="Li J."/>
            <person name="Wang J."/>
            <person name="Deng Y."/>
            <person name="Ran L."/>
            <person name="Shi X."/>
            <person name="Wang X."/>
            <person name="Wu Q."/>
            <person name="Li C."/>
            <person name="Ren X."/>
            <person name="Wang J."/>
            <person name="Wang X."/>
            <person name="Li D."/>
            <person name="Liu D."/>
            <person name="Zhang X."/>
            <person name="Ji Z."/>
            <person name="Zhao W."/>
            <person name="Sun Y."/>
            <person name="Zhang Z."/>
            <person name="Bao J."/>
            <person name="Han Y."/>
            <person name="Dong L."/>
            <person name="Ji J."/>
            <person name="Chen P."/>
            <person name="Wu S."/>
            <person name="Liu J."/>
            <person name="Xiao Y."/>
            <person name="Bu D."/>
            <person name="Tan J."/>
            <person name="Yang L."/>
            <person name="Ye C."/>
            <person name="Zhang J."/>
            <person name="Xu J."/>
            <person name="Zhou Y."/>
            <person name="Yu Y."/>
            <person name="Zhang B."/>
            <person name="Zhuang S."/>
            <person name="Wei H."/>
            <person name="Liu B."/>
            <person name="Lei M."/>
            <person name="Yu H."/>
            <person name="Li Y."/>
            <person name="Xu H."/>
            <person name="Wei S."/>
            <person name="He X."/>
            <person name="Fang L."/>
            <person name="Zhang Z."/>
            <person name="Zhang Y."/>
            <person name="Huang X."/>
            <person name="Su Z."/>
            <person name="Tong W."/>
            <person name="Li J."/>
            <person name="Tong Z."/>
            <person name="Li S."/>
            <person name="Ye J."/>
            <person name="Wang L."/>
            <person name="Fang L."/>
            <person name="Lei T."/>
            <person name="Chen C.-S."/>
            <person name="Chen H.-C."/>
            <person name="Xu Z."/>
            <person name="Li H."/>
            <person name="Huang H."/>
            <person name="Zhang F."/>
            <person name="Xu H."/>
            <person name="Li N."/>
            <person name="Zhao C."/>
            <person name="Li S."/>
            <person name="Dong L."/>
            <person name="Huang Y."/>
            <person name="Li L."/>
            <person name="Xi Y."/>
            <person name="Qi Q."/>
            <person name="Li W."/>
            <person name="Zhang B."/>
            <person name="Hu W."/>
            <person name="Zhang Y."/>
            <person name="Tian X."/>
            <person name="Jiao Y."/>
            <person name="Liang X."/>
            <person name="Jin J."/>
            <person name="Gao L."/>
            <person name="Zheng W."/>
            <person name="Hao B."/>
            <person name="Liu S.-M."/>
            <person name="Wang W."/>
            <person name="Yuan L."/>
            <person name="Cao M."/>
            <person name="McDermott J."/>
            <person name="Samudrala R."/>
            <person name="Wang J."/>
            <person name="Wong G.K.-S."/>
            <person name="Yang H."/>
        </authorList>
    </citation>
    <scope>NUCLEOTIDE SEQUENCE [LARGE SCALE GENOMIC DNA]</scope>
    <source>
        <strain>cv. Nipponbare</strain>
    </source>
</reference>
<reference key="6">
    <citation type="journal article" date="2003" name="Science">
        <title>Collection, mapping, and annotation of over 28,000 cDNA clones from japonica rice.</title>
        <authorList>
            <consortium name="The rice full-length cDNA consortium"/>
        </authorList>
    </citation>
    <scope>NUCLEOTIDE SEQUENCE [LARGE SCALE MRNA]</scope>
    <source>
        <strain>cv. Nipponbare</strain>
    </source>
</reference>
<reference key="7">
    <citation type="journal article" date="2002" name="Plant J.">
        <title>DNA binding and dimerization specificity and potential targets for the TCP protein family.</title>
        <authorList>
            <person name="Kosugi S."/>
            <person name="Ohashi Y."/>
        </authorList>
    </citation>
    <scope>FUNCTION</scope>
</reference>
<reference key="8">
    <citation type="journal article" date="2013" name="Plant Cell">
        <title>Genome-wide binding analysis of the transcription activator ideal plant architecture1 reveals a complex network regulating rice plant architecture.</title>
        <authorList>
            <person name="Lu Z."/>
            <person name="Yu H."/>
            <person name="Xiong G."/>
            <person name="Wang J."/>
            <person name="Jiao Y."/>
            <person name="Liu G."/>
            <person name="Jing Y."/>
            <person name="Meng X."/>
            <person name="Hu X."/>
            <person name="Qian Q."/>
            <person name="Fu X."/>
            <person name="Wang Y."/>
            <person name="Li J."/>
        </authorList>
    </citation>
    <scope>FUNCTION</scope>
    <scope>INTERACTION WITH SPL14</scope>
    <scope>SUBCELLULAR LOCATION</scope>
</reference>
<accession>Q6ZBH6</accession>
<accession>B7E537</accession>
<accession>O23876</accession>
<organism>
    <name type="scientific">Oryza sativa subsp. japonica</name>
    <name type="common">Rice</name>
    <dbReference type="NCBI Taxonomy" id="39947"/>
    <lineage>
        <taxon>Eukaryota</taxon>
        <taxon>Viridiplantae</taxon>
        <taxon>Streptophyta</taxon>
        <taxon>Embryophyta</taxon>
        <taxon>Tracheophyta</taxon>
        <taxon>Spermatophyta</taxon>
        <taxon>Magnoliopsida</taxon>
        <taxon>Liliopsida</taxon>
        <taxon>Poales</taxon>
        <taxon>Poaceae</taxon>
        <taxon>BOP clade</taxon>
        <taxon>Oryzoideae</taxon>
        <taxon>Oryzeae</taxon>
        <taxon>Oryzinae</taxon>
        <taxon>Oryza</taxon>
        <taxon>Oryza sativa</taxon>
    </lineage>
</organism>
<sequence>MEAQAQDKAEEGEEEGTRQQHAQAGPVGAAGGGGGGGAAAVAMSAIPMNSWLVPKPEPVEFFGGMAMVRKPPPRNRDRHTKVEGRGRRIRMPAACAARIFQLTRELGHKSDGETIRWLLQQSEPAIIAATGTGTVPAIATTVDGVLRIPTQSSSSSGPASSAVVDGEESSAKRRRKLQPTRAVAGASPLATAAPAAYYPVIADPLLQGSGGAAISVPSGLAPITATGAPQGLVPVFAVPATGSPAVAGGNRMIPQATAVWMVPQPAGAAGAGNQPTQFWAIQSAPQLVNFAGAQFPTAINVADFQQQQQQQPVSTTIVQNSNSGEHMHFSGADSHEQQRRGRKEGNSGGVVDHPEEDEDDDDDEPVSDSSPEE</sequence>